<dbReference type="EC" id="2.1.3.2" evidence="1"/>
<dbReference type="EMBL" id="CP000738">
    <property type="protein sequence ID" value="ABR59791.1"/>
    <property type="molecule type" value="Genomic_DNA"/>
</dbReference>
<dbReference type="RefSeq" id="WP_011975127.1">
    <property type="nucleotide sequence ID" value="NC_009636.1"/>
</dbReference>
<dbReference type="RefSeq" id="YP_001326626.1">
    <property type="nucleotide sequence ID" value="NC_009636.1"/>
</dbReference>
<dbReference type="SMR" id="A6U811"/>
<dbReference type="STRING" id="366394.Smed_0936"/>
<dbReference type="KEGG" id="smd:Smed_0936"/>
<dbReference type="PATRIC" id="fig|366394.8.peg.4052"/>
<dbReference type="eggNOG" id="COG0540">
    <property type="taxonomic scope" value="Bacteria"/>
</dbReference>
<dbReference type="HOGENOM" id="CLU_043846_2_0_5"/>
<dbReference type="OrthoDB" id="9774690at2"/>
<dbReference type="UniPathway" id="UPA00070">
    <property type="reaction ID" value="UER00116"/>
</dbReference>
<dbReference type="Proteomes" id="UP000001108">
    <property type="component" value="Chromosome"/>
</dbReference>
<dbReference type="GO" id="GO:0005829">
    <property type="term" value="C:cytosol"/>
    <property type="evidence" value="ECO:0007669"/>
    <property type="project" value="TreeGrafter"/>
</dbReference>
<dbReference type="GO" id="GO:0016597">
    <property type="term" value="F:amino acid binding"/>
    <property type="evidence" value="ECO:0007669"/>
    <property type="project" value="InterPro"/>
</dbReference>
<dbReference type="GO" id="GO:0004070">
    <property type="term" value="F:aspartate carbamoyltransferase activity"/>
    <property type="evidence" value="ECO:0007669"/>
    <property type="project" value="UniProtKB-UniRule"/>
</dbReference>
<dbReference type="GO" id="GO:0006207">
    <property type="term" value="P:'de novo' pyrimidine nucleobase biosynthetic process"/>
    <property type="evidence" value="ECO:0007669"/>
    <property type="project" value="InterPro"/>
</dbReference>
<dbReference type="GO" id="GO:0044205">
    <property type="term" value="P:'de novo' UMP biosynthetic process"/>
    <property type="evidence" value="ECO:0007669"/>
    <property type="project" value="UniProtKB-UniRule"/>
</dbReference>
<dbReference type="GO" id="GO:0006520">
    <property type="term" value="P:amino acid metabolic process"/>
    <property type="evidence" value="ECO:0007669"/>
    <property type="project" value="InterPro"/>
</dbReference>
<dbReference type="FunFam" id="3.40.50.1370:FF:000007">
    <property type="entry name" value="Aspartate carbamoyltransferase"/>
    <property type="match status" value="1"/>
</dbReference>
<dbReference type="Gene3D" id="3.40.50.1370">
    <property type="entry name" value="Aspartate/ornithine carbamoyltransferase"/>
    <property type="match status" value="2"/>
</dbReference>
<dbReference type="HAMAP" id="MF_00001">
    <property type="entry name" value="Asp_carb_tr"/>
    <property type="match status" value="1"/>
</dbReference>
<dbReference type="InterPro" id="IPR006132">
    <property type="entry name" value="Asp/Orn_carbamoyltranf_P-bd"/>
</dbReference>
<dbReference type="InterPro" id="IPR006130">
    <property type="entry name" value="Asp/Orn_carbamoylTrfase"/>
</dbReference>
<dbReference type="InterPro" id="IPR036901">
    <property type="entry name" value="Asp/Orn_carbamoylTrfase_sf"/>
</dbReference>
<dbReference type="InterPro" id="IPR002082">
    <property type="entry name" value="Asp_carbamoyltransf"/>
</dbReference>
<dbReference type="InterPro" id="IPR006131">
    <property type="entry name" value="Asp_carbamoyltransf_Asp/Orn-bd"/>
</dbReference>
<dbReference type="NCBIfam" id="TIGR00670">
    <property type="entry name" value="asp_carb_tr"/>
    <property type="match status" value="1"/>
</dbReference>
<dbReference type="NCBIfam" id="NF002032">
    <property type="entry name" value="PRK00856.1"/>
    <property type="match status" value="1"/>
</dbReference>
<dbReference type="PANTHER" id="PTHR45753:SF6">
    <property type="entry name" value="ASPARTATE CARBAMOYLTRANSFERASE"/>
    <property type="match status" value="1"/>
</dbReference>
<dbReference type="PANTHER" id="PTHR45753">
    <property type="entry name" value="ORNITHINE CARBAMOYLTRANSFERASE, MITOCHONDRIAL"/>
    <property type="match status" value="1"/>
</dbReference>
<dbReference type="Pfam" id="PF00185">
    <property type="entry name" value="OTCace"/>
    <property type="match status" value="1"/>
</dbReference>
<dbReference type="Pfam" id="PF02729">
    <property type="entry name" value="OTCace_N"/>
    <property type="match status" value="1"/>
</dbReference>
<dbReference type="PRINTS" id="PR00100">
    <property type="entry name" value="AOTCASE"/>
</dbReference>
<dbReference type="PRINTS" id="PR00101">
    <property type="entry name" value="ATCASE"/>
</dbReference>
<dbReference type="SUPFAM" id="SSF53671">
    <property type="entry name" value="Aspartate/ornithine carbamoyltransferase"/>
    <property type="match status" value="1"/>
</dbReference>
<dbReference type="PROSITE" id="PS00097">
    <property type="entry name" value="CARBAMOYLTRANSFERASE"/>
    <property type="match status" value="1"/>
</dbReference>
<accession>A6U811</accession>
<keyword id="KW-0665">Pyrimidine biosynthesis</keyword>
<keyword id="KW-0808">Transferase</keyword>
<comment type="function">
    <text evidence="1">Catalyzes the condensation of carbamoyl phosphate and aspartate to form carbamoyl aspartate and inorganic phosphate, the committed step in the de novo pyrimidine nucleotide biosynthesis pathway.</text>
</comment>
<comment type="catalytic activity">
    <reaction evidence="1">
        <text>carbamoyl phosphate + L-aspartate = N-carbamoyl-L-aspartate + phosphate + H(+)</text>
        <dbReference type="Rhea" id="RHEA:20013"/>
        <dbReference type="ChEBI" id="CHEBI:15378"/>
        <dbReference type="ChEBI" id="CHEBI:29991"/>
        <dbReference type="ChEBI" id="CHEBI:32814"/>
        <dbReference type="ChEBI" id="CHEBI:43474"/>
        <dbReference type="ChEBI" id="CHEBI:58228"/>
        <dbReference type="EC" id="2.1.3.2"/>
    </reaction>
</comment>
<comment type="pathway">
    <text evidence="1">Pyrimidine metabolism; UMP biosynthesis via de novo pathway; (S)-dihydroorotate from bicarbonate: step 2/3.</text>
</comment>
<comment type="subunit">
    <text evidence="1">Heterododecamer (2C3:3R2) of six catalytic PyrB chains organized as two trimers (C3), and six regulatory PyrI chains organized as three dimers (R2).</text>
</comment>
<comment type="similarity">
    <text evidence="1">Belongs to the aspartate/ornithine carbamoyltransferase superfamily. ATCase family.</text>
</comment>
<feature type="chain" id="PRO_0000321158" description="Aspartate carbamoyltransferase catalytic subunit">
    <location>
        <begin position="1"/>
        <end position="313"/>
    </location>
</feature>
<feature type="binding site" evidence="1">
    <location>
        <position position="59"/>
    </location>
    <ligand>
        <name>carbamoyl phosphate</name>
        <dbReference type="ChEBI" id="CHEBI:58228"/>
    </ligand>
</feature>
<feature type="binding site" evidence="1">
    <location>
        <position position="60"/>
    </location>
    <ligand>
        <name>carbamoyl phosphate</name>
        <dbReference type="ChEBI" id="CHEBI:58228"/>
    </ligand>
</feature>
<feature type="binding site" evidence="1">
    <location>
        <position position="87"/>
    </location>
    <ligand>
        <name>L-aspartate</name>
        <dbReference type="ChEBI" id="CHEBI:29991"/>
    </ligand>
</feature>
<feature type="binding site" evidence="1">
    <location>
        <position position="109"/>
    </location>
    <ligand>
        <name>carbamoyl phosphate</name>
        <dbReference type="ChEBI" id="CHEBI:58228"/>
    </ligand>
</feature>
<feature type="binding site" evidence="1">
    <location>
        <position position="137"/>
    </location>
    <ligand>
        <name>carbamoyl phosphate</name>
        <dbReference type="ChEBI" id="CHEBI:58228"/>
    </ligand>
</feature>
<feature type="binding site" evidence="1">
    <location>
        <position position="140"/>
    </location>
    <ligand>
        <name>carbamoyl phosphate</name>
        <dbReference type="ChEBI" id="CHEBI:58228"/>
    </ligand>
</feature>
<feature type="binding site" evidence="1">
    <location>
        <position position="170"/>
    </location>
    <ligand>
        <name>L-aspartate</name>
        <dbReference type="ChEBI" id="CHEBI:29991"/>
    </ligand>
</feature>
<feature type="binding site" evidence="1">
    <location>
        <position position="224"/>
    </location>
    <ligand>
        <name>L-aspartate</name>
        <dbReference type="ChEBI" id="CHEBI:29991"/>
    </ligand>
</feature>
<feature type="binding site" evidence="1">
    <location>
        <position position="265"/>
    </location>
    <ligand>
        <name>carbamoyl phosphate</name>
        <dbReference type="ChEBI" id="CHEBI:58228"/>
    </ligand>
</feature>
<feature type="binding site" evidence="1">
    <location>
        <position position="266"/>
    </location>
    <ligand>
        <name>carbamoyl phosphate</name>
        <dbReference type="ChEBI" id="CHEBI:58228"/>
    </ligand>
</feature>
<protein>
    <recommendedName>
        <fullName evidence="1">Aspartate carbamoyltransferase catalytic subunit</fullName>
        <ecNumber evidence="1">2.1.3.2</ecNumber>
    </recommendedName>
    <alternativeName>
        <fullName evidence="1">Aspartate transcarbamylase</fullName>
        <shortName evidence="1">ATCase</shortName>
    </alternativeName>
</protein>
<sequence length="313" mass="33983">MITFPHRHLLGIKGLTEQDITLLLDRADEAVKISRQREKKTSSLRGLTQINLFFEASTRTQSSFELAGKRLGADVMNMSVGNSSVKKGETLIDTAMTLNAMHPDVLVVRHSSAGAASLLAQKVSCSVVNAGDGQHEHPTQALLDALTIRRAKGKLSRIIVAICGDVLHSRVARSNILLLNQMGARVRVVAPATLLPAGIAEMGAEVYHSMAEGLKDADVVMMLRLQRERMAGSFVPSVREYFHYYGLDAEKLKAAKDDALVMHPGPMNRGVEIASEIADGPQSVIEQQVEMGVAVRMAVMETLLLSQNQGPRV</sequence>
<reference key="1">
    <citation type="submission" date="2007-06" db="EMBL/GenBank/DDBJ databases">
        <title>Complete sequence of Sinorhizobium medicae WSM419 chromosome.</title>
        <authorList>
            <consortium name="US DOE Joint Genome Institute"/>
            <person name="Copeland A."/>
            <person name="Lucas S."/>
            <person name="Lapidus A."/>
            <person name="Barry K."/>
            <person name="Glavina del Rio T."/>
            <person name="Dalin E."/>
            <person name="Tice H."/>
            <person name="Pitluck S."/>
            <person name="Chain P."/>
            <person name="Malfatti S."/>
            <person name="Shin M."/>
            <person name="Vergez L."/>
            <person name="Schmutz J."/>
            <person name="Larimer F."/>
            <person name="Land M."/>
            <person name="Hauser L."/>
            <person name="Kyrpides N."/>
            <person name="Mikhailova N."/>
            <person name="Reeve W.G."/>
            <person name="Richardson P."/>
        </authorList>
    </citation>
    <scope>NUCLEOTIDE SEQUENCE [LARGE SCALE GENOMIC DNA]</scope>
    <source>
        <strain>WSM419</strain>
    </source>
</reference>
<gene>
    <name evidence="1" type="primary">pyrB</name>
    <name type="ordered locus">Smed_0936</name>
</gene>
<proteinExistence type="inferred from homology"/>
<name>PYRB_SINMW</name>
<organism>
    <name type="scientific">Sinorhizobium medicae (strain WSM419)</name>
    <name type="common">Ensifer medicae</name>
    <dbReference type="NCBI Taxonomy" id="366394"/>
    <lineage>
        <taxon>Bacteria</taxon>
        <taxon>Pseudomonadati</taxon>
        <taxon>Pseudomonadota</taxon>
        <taxon>Alphaproteobacteria</taxon>
        <taxon>Hyphomicrobiales</taxon>
        <taxon>Rhizobiaceae</taxon>
        <taxon>Sinorhizobium/Ensifer group</taxon>
        <taxon>Sinorhizobium</taxon>
    </lineage>
</organism>
<evidence type="ECO:0000255" key="1">
    <source>
        <dbReference type="HAMAP-Rule" id="MF_00001"/>
    </source>
</evidence>